<proteinExistence type="evidence at protein level"/>
<protein>
    <recommendedName>
        <fullName evidence="4">Peroxiredoxin-6</fullName>
        <ecNumber evidence="4">1.11.1.27</ecNumber>
    </recommendedName>
    <alternativeName>
        <fullName evidence="4">1-Cys peroxiredoxin</fullName>
        <shortName evidence="4">1-Cys PRX</shortName>
    </alternativeName>
    <alternativeName>
        <fullName evidence="4">Acidic calcium-independent phospholipase A2</fullName>
        <shortName evidence="4">aiPLA2</shortName>
        <ecNumber>3.1.1.4</ecNumber>
    </alternativeName>
    <alternativeName>
        <fullName evidence="4">Antioxidant protein 2</fullName>
    </alternativeName>
    <alternativeName>
        <fullName evidence="6">Glutathione-dependent peroxiredoxin</fullName>
    </alternativeName>
    <alternativeName>
        <fullName evidence="4">Lysophosphatidylcholine acyltransferase 5</fullName>
        <shortName>LPC acyltransferase 5</shortName>
        <shortName>LPCAT-5</shortName>
        <shortName>Lyso-PC acyltransferase 5</shortName>
        <ecNumber evidence="4">2.3.1.23</ecNumber>
    </alternativeName>
    <alternativeName>
        <fullName evidence="4">Non-selenium glutathione peroxidase</fullName>
        <shortName evidence="4">NSGPx</shortName>
    </alternativeName>
</protein>
<accession>P86215</accession>
<feature type="chain" id="PRO_0000394303" description="Peroxiredoxin-6">
    <location>
        <begin position="1" status="less than"/>
        <end position="50" status="greater than"/>
    </location>
</feature>
<feature type="domain" description="Thioredoxin" evidence="5">
    <location>
        <begin position="1" status="less than"/>
        <end position="50" status="greater than"/>
    </location>
</feature>
<feature type="active site" description="Cysteine sulfenic acid (-SOH) intermediate; for peroxidase activity" evidence="4">
    <location>
        <position position="6"/>
    </location>
</feature>
<feature type="active site" description="For phospholipase activity" evidence="2">
    <location>
        <position position="28"/>
    </location>
</feature>
<feature type="modified residue" description="Phosphothreonine" evidence="4">
    <location>
        <position position="3"/>
    </location>
</feature>
<feature type="modified residue" description="N6-acetyllysine" evidence="4">
    <location>
        <position position="19"/>
    </location>
</feature>
<feature type="non-consecutive residues" evidence="6">
    <location>
        <begin position="12"/>
        <end position="13"/>
    </location>
</feature>
<feature type="non-consecutive residues" evidence="6">
    <location>
        <begin position="20"/>
        <end position="21"/>
    </location>
</feature>
<feature type="non-terminal residue">
    <location>
        <position position="1"/>
    </location>
</feature>
<feature type="non-terminal residue">
    <location>
        <position position="50"/>
    </location>
</feature>
<sequence>DFTPVCTTELGRLAPEFAKRVVFIFGPDKKLKLSILYPATTGRNFDEILR</sequence>
<comment type="function">
    <text evidence="4">Thiol-specific peroxidase that catalyzes the reduction of hydrogen peroxide and organic hydroperoxides to water and alcohols, respectively (By similarity). Can reduce H(2)O(2) and short chain organic, fatty acid, and phospholipid hydroperoxides (By similarity). Also has phospholipase activity, and can therefore either reduce the oxidized sn-2 fatty acyl group of phospholipids (peroxidase activity) or hydrolyze the sn-2 ester bond of phospholipids (phospholipase activity) (By similarity). These activities are dependent on binding to phospholipids at acidic pH and to oxidized phospholipds at cytosolic pH (By similarity). Plays a role in cell protection against oxidative stress by detoxifying peroxides and in phospholipid homeostasis (By similarity). Exhibits acyl-CoA-dependent lysophospholipid acyltransferase which mediates the conversion of lysophosphatidylcholine (1-acyl-sn-glycero-3-phosphocholine or LPC) into phosphatidylcholine (1,2-diacyl-sn-glycero-3-phosphocholine or PC) (By similarity). Shows a clear preference for LPC as the lysophospholipid and for palmitoyl CoA as the fatty acyl substrate (By similarity).</text>
</comment>
<comment type="catalytic activity">
    <reaction evidence="4">
        <text>a hydroperoxide + 2 glutathione = an alcohol + glutathione disulfide + H2O</text>
        <dbReference type="Rhea" id="RHEA:62632"/>
        <dbReference type="ChEBI" id="CHEBI:15377"/>
        <dbReference type="ChEBI" id="CHEBI:30879"/>
        <dbReference type="ChEBI" id="CHEBI:35924"/>
        <dbReference type="ChEBI" id="CHEBI:57925"/>
        <dbReference type="ChEBI" id="CHEBI:58297"/>
        <dbReference type="EC" id="1.11.1.27"/>
    </reaction>
</comment>
<comment type="catalytic activity">
    <reaction evidence="4">
        <text>a 1,2-diacyl-sn-glycero-3-phosphocholine + H2O = a 1-acyl-sn-glycero-3-phosphocholine + a fatty acid + H(+)</text>
        <dbReference type="Rhea" id="RHEA:15801"/>
        <dbReference type="ChEBI" id="CHEBI:15377"/>
        <dbReference type="ChEBI" id="CHEBI:15378"/>
        <dbReference type="ChEBI" id="CHEBI:28868"/>
        <dbReference type="ChEBI" id="CHEBI:57643"/>
        <dbReference type="ChEBI" id="CHEBI:58168"/>
        <dbReference type="EC" id="3.1.1.4"/>
    </reaction>
</comment>
<comment type="catalytic activity">
    <reaction evidence="4">
        <text>a 1-acyl-sn-glycero-3-phosphocholine + an acyl-CoA = a 1,2-diacyl-sn-glycero-3-phosphocholine + CoA</text>
        <dbReference type="Rhea" id="RHEA:12937"/>
        <dbReference type="ChEBI" id="CHEBI:57287"/>
        <dbReference type="ChEBI" id="CHEBI:57643"/>
        <dbReference type="ChEBI" id="CHEBI:58168"/>
        <dbReference type="ChEBI" id="CHEBI:58342"/>
        <dbReference type="EC" id="2.3.1.23"/>
    </reaction>
</comment>
<comment type="catalytic activity">
    <reaction evidence="4">
        <text>1-hexadecanoyl-sn-glycero-3-phosphocholine + hexadecanoyl-CoA = 1,2-dihexadecanoyl-sn-glycero-3-phosphocholine + CoA</text>
        <dbReference type="Rhea" id="RHEA:35983"/>
        <dbReference type="ChEBI" id="CHEBI:57287"/>
        <dbReference type="ChEBI" id="CHEBI:57379"/>
        <dbReference type="ChEBI" id="CHEBI:72998"/>
        <dbReference type="ChEBI" id="CHEBI:72999"/>
    </reaction>
    <physiologicalReaction direction="left-to-right" evidence="4">
        <dbReference type="Rhea" id="RHEA:35984"/>
    </physiologicalReaction>
</comment>
<comment type="catalytic activity">
    <reaction evidence="4">
        <text>1,2-dihexadecanoyl-sn-glycero-3-phosphocholine + H2O = 1-hexadecanoyl-sn-glycero-3-phosphocholine + hexadecanoate + H(+)</text>
        <dbReference type="Rhea" id="RHEA:41223"/>
        <dbReference type="ChEBI" id="CHEBI:7896"/>
        <dbReference type="ChEBI" id="CHEBI:15377"/>
        <dbReference type="ChEBI" id="CHEBI:15378"/>
        <dbReference type="ChEBI" id="CHEBI:72998"/>
        <dbReference type="ChEBI" id="CHEBI:72999"/>
    </reaction>
    <physiologicalReaction direction="left-to-right" evidence="4">
        <dbReference type="Rhea" id="RHEA:41224"/>
    </physiologicalReaction>
</comment>
<comment type="subunit">
    <text evidence="1 3 4">Homodimer (By similarity). Interacts with GSTP1; mediates PRDX6 glutathionylation and regeneration (By similarity). Interacts with APEX1. Interacts with STH. May interact with FAM168B (By similarity). May interact with HTR2A (By similarity).</text>
</comment>
<comment type="subcellular location">
    <subcellularLocation>
        <location evidence="2">Cytoplasm</location>
    </subcellularLocation>
    <subcellularLocation>
        <location evidence="2">Lysosome</location>
    </subcellularLocation>
    <text evidence="2">Also found in lung secretory organelles (lamellar bodies).</text>
</comment>
<comment type="PTM">
    <text evidence="4">Irreversibly inactivated by overoxidation of Cys-6 to sulfinic acid (Cys-SO(2)H) and sulfonic acid (Cys-SO(3)H) forms upon oxidative stress.</text>
</comment>
<comment type="PTM">
    <text evidence="2">Phosphorylation at Thr-177 by MAP kinases increases the phospholipase activity of the enzyme (By similarity). The phosphorylated form exhibits a greater lysophosphatidylcholine acyltransferase activity compared to the non-phosphorylated form (By similarity).</text>
</comment>
<comment type="miscellaneous">
    <text evidence="2">The active site is a conserved redox-active cysteine residue, the peroxidatic cysteine (C(P)), which makes the nucleophilic attack on the peroxide substrate. The peroxide oxidizes the C(P)-SH to cysteine sulfenic acid (C(P)-SOH), which then reacts with another cysteine residue, the resolving cysteine (C(R)), to form a disulfide bridge. The disulfide is subsequently reduced by an appropriate electron donor to complete the catalytic cycle. In this 1-Cys peroxiredoxin, no C(R) is present and C(P) instead forms a disulfide with a cysteine from another protein or with a small thiol molecule. C(P) is reactivated by glutathionylation mediated by glutathione S-transferase Pi, followed by spontaneous reduction of the enzyme with glutathione.</text>
</comment>
<comment type="similarity">
    <text evidence="6">Belongs to the peroxiredoxin family. Prx6 subfamily.</text>
</comment>
<keyword id="KW-0007">Acetylation</keyword>
<keyword id="KW-0049">Antioxidant</keyword>
<keyword id="KW-0963">Cytoplasm</keyword>
<keyword id="KW-0378">Hydrolase</keyword>
<keyword id="KW-0442">Lipid degradation</keyword>
<keyword id="KW-0443">Lipid metabolism</keyword>
<keyword id="KW-0458">Lysosome</keyword>
<keyword id="KW-0511">Multifunctional enzyme</keyword>
<keyword id="KW-0560">Oxidoreductase</keyword>
<keyword id="KW-0575">Peroxidase</keyword>
<keyword id="KW-0597">Phosphoprotein</keyword>
<keyword id="KW-0676">Redox-active center</keyword>
<keyword id="KW-1185">Reference proteome</keyword>
<keyword id="KW-0808">Transferase</keyword>
<evidence type="ECO:0000250" key="1">
    <source>
        <dbReference type="UniProtKB" id="O08709"/>
    </source>
</evidence>
<evidence type="ECO:0000250" key="2">
    <source>
        <dbReference type="UniProtKB" id="O35244"/>
    </source>
</evidence>
<evidence type="ECO:0000250" key="3">
    <source>
        <dbReference type="UniProtKB" id="O77834"/>
    </source>
</evidence>
<evidence type="ECO:0000250" key="4">
    <source>
        <dbReference type="UniProtKB" id="P30041"/>
    </source>
</evidence>
<evidence type="ECO:0000255" key="5">
    <source>
        <dbReference type="PROSITE-ProRule" id="PRU00691"/>
    </source>
</evidence>
<evidence type="ECO:0000305" key="6"/>
<dbReference type="EC" id="1.11.1.27" evidence="4"/>
<dbReference type="EC" id="3.1.1.4"/>
<dbReference type="EC" id="2.3.1.23" evidence="4"/>
<dbReference type="SMR" id="P86215"/>
<dbReference type="STRING" id="10036.ENSMAUP00000011769"/>
<dbReference type="eggNOG" id="KOG0854">
    <property type="taxonomic scope" value="Eukaryota"/>
</dbReference>
<dbReference type="Proteomes" id="UP000189706">
    <property type="component" value="Unplaced"/>
</dbReference>
<dbReference type="GO" id="GO:0005737">
    <property type="term" value="C:cytoplasm"/>
    <property type="evidence" value="ECO:0000250"/>
    <property type="project" value="UniProtKB"/>
</dbReference>
<dbReference type="GO" id="GO:0005764">
    <property type="term" value="C:lysosome"/>
    <property type="evidence" value="ECO:0007669"/>
    <property type="project" value="UniProtKB-SubCell"/>
</dbReference>
<dbReference type="GO" id="GO:0047184">
    <property type="term" value="F:1-acylglycerophosphocholine O-acyltransferase activity"/>
    <property type="evidence" value="ECO:0000250"/>
    <property type="project" value="UniProtKB"/>
</dbReference>
<dbReference type="GO" id="GO:0004601">
    <property type="term" value="F:peroxidase activity"/>
    <property type="evidence" value="ECO:0007669"/>
    <property type="project" value="UniProtKB-KW"/>
</dbReference>
<dbReference type="GO" id="GO:0004623">
    <property type="term" value="F:phospholipase A2 activity"/>
    <property type="evidence" value="ECO:0000250"/>
    <property type="project" value="UniProtKB"/>
</dbReference>
<dbReference type="GO" id="GO:0016042">
    <property type="term" value="P:lipid catabolic process"/>
    <property type="evidence" value="ECO:0007669"/>
    <property type="project" value="UniProtKB-KW"/>
</dbReference>
<dbReference type="Gene3D" id="3.40.30.10">
    <property type="entry name" value="Glutaredoxin"/>
    <property type="match status" value="1"/>
</dbReference>
<dbReference type="InterPro" id="IPR036249">
    <property type="entry name" value="Thioredoxin-like_sf"/>
</dbReference>
<dbReference type="SUPFAM" id="SSF52833">
    <property type="entry name" value="Thioredoxin-like"/>
    <property type="match status" value="1"/>
</dbReference>
<reference key="1">
    <citation type="journal article" date="2010" name="Asian J. Androl.">
        <title>Glucose-regulated protein precursor (GRP78) and tumor rejection antigen (GP96) are unique to hamster caput epididymal spermatozoa.</title>
        <authorList>
            <person name="Kameshwari D.B."/>
            <person name="Bhande S."/>
            <person name="Sundaram C.S."/>
            <person name="Kota V."/>
            <person name="Siva A.B."/>
            <person name="Shivaji S."/>
        </authorList>
    </citation>
    <scope>IDENTIFICATION BY MASS SPECTROMETRY</scope>
</reference>
<gene>
    <name evidence="4" type="primary">PRDX6</name>
</gene>
<name>PRDX6_MESAU</name>
<organism>
    <name type="scientific">Mesocricetus auratus</name>
    <name type="common">Golden hamster</name>
    <dbReference type="NCBI Taxonomy" id="10036"/>
    <lineage>
        <taxon>Eukaryota</taxon>
        <taxon>Metazoa</taxon>
        <taxon>Chordata</taxon>
        <taxon>Craniata</taxon>
        <taxon>Vertebrata</taxon>
        <taxon>Euteleostomi</taxon>
        <taxon>Mammalia</taxon>
        <taxon>Eutheria</taxon>
        <taxon>Euarchontoglires</taxon>
        <taxon>Glires</taxon>
        <taxon>Rodentia</taxon>
        <taxon>Myomorpha</taxon>
        <taxon>Muroidea</taxon>
        <taxon>Cricetidae</taxon>
        <taxon>Cricetinae</taxon>
        <taxon>Mesocricetus</taxon>
    </lineage>
</organism>